<feature type="chain" id="PRO_0000220963" description="Ragulator complex protein LAMTOR2 homolog">
    <location>
        <begin position="1"/>
        <end position="125"/>
    </location>
</feature>
<feature type="sequence conflict" description="In Ref. 3; AAR31126." evidence="4" ref="3">
    <original>H</original>
    <variation>L</variation>
    <location>
        <position position="80"/>
    </location>
</feature>
<name>LTOR2_DROME</name>
<sequence>MLKPKALTQVLSQANTGGVENTLLLSQEGALLAYSGYGDKDARITAAIASNIWAAYEKHGRNAFREGRLTFVLIDCENGHVAITQVASVLLCLYAKQTVGLGLLKQKAMSLASYLERPLKQISAS</sequence>
<comment type="function">
    <text evidence="2">Regulator of the TOR pathway, a signaling cascade that promotes cell growth in response to growth factors, energy levels, and amino acids. As part of the Ragulator complex, may activate the TOR signaling cascade in response to amino acids.</text>
</comment>
<comment type="subunit">
    <text evidence="1">Part of the Ragulator complex composed of Lamtor3, Lamtor2, CG14184, CG14812, and Lamtor4.</text>
</comment>
<comment type="interaction">
    <interactant intactId="EBI-98229">
        <id>Q9V8I2</id>
    </interactant>
    <interactant intactId="EBI-111967">
        <id>Q9VJD2</id>
        <label>Lamtor3</label>
    </interactant>
    <organismsDiffer>false</organismsDiffer>
    <experiments>6</experiments>
</comment>
<comment type="similarity">
    <text evidence="4">Belongs to the GAMAD family.</text>
</comment>
<reference key="1">
    <citation type="journal article" date="2000" name="Science">
        <title>The genome sequence of Drosophila melanogaster.</title>
        <authorList>
            <person name="Adams M.D."/>
            <person name="Celniker S.E."/>
            <person name="Holt R.A."/>
            <person name="Evans C.A."/>
            <person name="Gocayne J.D."/>
            <person name="Amanatides P.G."/>
            <person name="Scherer S.E."/>
            <person name="Li P.W."/>
            <person name="Hoskins R.A."/>
            <person name="Galle R.F."/>
            <person name="George R.A."/>
            <person name="Lewis S.E."/>
            <person name="Richards S."/>
            <person name="Ashburner M."/>
            <person name="Henderson S.N."/>
            <person name="Sutton G.G."/>
            <person name="Wortman J.R."/>
            <person name="Yandell M.D."/>
            <person name="Zhang Q."/>
            <person name="Chen L.X."/>
            <person name="Brandon R.C."/>
            <person name="Rogers Y.-H.C."/>
            <person name="Blazej R.G."/>
            <person name="Champe M."/>
            <person name="Pfeiffer B.D."/>
            <person name="Wan K.H."/>
            <person name="Doyle C."/>
            <person name="Baxter E.G."/>
            <person name="Helt G."/>
            <person name="Nelson C.R."/>
            <person name="Miklos G.L.G."/>
            <person name="Abril J.F."/>
            <person name="Agbayani A."/>
            <person name="An H.-J."/>
            <person name="Andrews-Pfannkoch C."/>
            <person name="Baldwin D."/>
            <person name="Ballew R.M."/>
            <person name="Basu A."/>
            <person name="Baxendale J."/>
            <person name="Bayraktaroglu L."/>
            <person name="Beasley E.M."/>
            <person name="Beeson K.Y."/>
            <person name="Benos P.V."/>
            <person name="Berman B.P."/>
            <person name="Bhandari D."/>
            <person name="Bolshakov S."/>
            <person name="Borkova D."/>
            <person name="Botchan M.R."/>
            <person name="Bouck J."/>
            <person name="Brokstein P."/>
            <person name="Brottier P."/>
            <person name="Burtis K.C."/>
            <person name="Busam D.A."/>
            <person name="Butler H."/>
            <person name="Cadieu E."/>
            <person name="Center A."/>
            <person name="Chandra I."/>
            <person name="Cherry J.M."/>
            <person name="Cawley S."/>
            <person name="Dahlke C."/>
            <person name="Davenport L.B."/>
            <person name="Davies P."/>
            <person name="de Pablos B."/>
            <person name="Delcher A."/>
            <person name="Deng Z."/>
            <person name="Mays A.D."/>
            <person name="Dew I."/>
            <person name="Dietz S.M."/>
            <person name="Dodson K."/>
            <person name="Doup L.E."/>
            <person name="Downes M."/>
            <person name="Dugan-Rocha S."/>
            <person name="Dunkov B.C."/>
            <person name="Dunn P."/>
            <person name="Durbin K.J."/>
            <person name="Evangelista C.C."/>
            <person name="Ferraz C."/>
            <person name="Ferriera S."/>
            <person name="Fleischmann W."/>
            <person name="Fosler C."/>
            <person name="Gabrielian A.E."/>
            <person name="Garg N.S."/>
            <person name="Gelbart W.M."/>
            <person name="Glasser K."/>
            <person name="Glodek A."/>
            <person name="Gong F."/>
            <person name="Gorrell J.H."/>
            <person name="Gu Z."/>
            <person name="Guan P."/>
            <person name="Harris M."/>
            <person name="Harris N.L."/>
            <person name="Harvey D.A."/>
            <person name="Heiman T.J."/>
            <person name="Hernandez J.R."/>
            <person name="Houck J."/>
            <person name="Hostin D."/>
            <person name="Houston K.A."/>
            <person name="Howland T.J."/>
            <person name="Wei M.-H."/>
            <person name="Ibegwam C."/>
            <person name="Jalali M."/>
            <person name="Kalush F."/>
            <person name="Karpen G.H."/>
            <person name="Ke Z."/>
            <person name="Kennison J.A."/>
            <person name="Ketchum K.A."/>
            <person name="Kimmel B.E."/>
            <person name="Kodira C.D."/>
            <person name="Kraft C.L."/>
            <person name="Kravitz S."/>
            <person name="Kulp D."/>
            <person name="Lai Z."/>
            <person name="Lasko P."/>
            <person name="Lei Y."/>
            <person name="Levitsky A.A."/>
            <person name="Li J.H."/>
            <person name="Li Z."/>
            <person name="Liang Y."/>
            <person name="Lin X."/>
            <person name="Liu X."/>
            <person name="Mattei B."/>
            <person name="McIntosh T.C."/>
            <person name="McLeod M.P."/>
            <person name="McPherson D."/>
            <person name="Merkulov G."/>
            <person name="Milshina N.V."/>
            <person name="Mobarry C."/>
            <person name="Morris J."/>
            <person name="Moshrefi A."/>
            <person name="Mount S.M."/>
            <person name="Moy M."/>
            <person name="Murphy B."/>
            <person name="Murphy L."/>
            <person name="Muzny D.M."/>
            <person name="Nelson D.L."/>
            <person name="Nelson D.R."/>
            <person name="Nelson K.A."/>
            <person name="Nixon K."/>
            <person name="Nusskern D.R."/>
            <person name="Pacleb J.M."/>
            <person name="Palazzolo M."/>
            <person name="Pittman G.S."/>
            <person name="Pan S."/>
            <person name="Pollard J."/>
            <person name="Puri V."/>
            <person name="Reese M.G."/>
            <person name="Reinert K."/>
            <person name="Remington K."/>
            <person name="Saunders R.D.C."/>
            <person name="Scheeler F."/>
            <person name="Shen H."/>
            <person name="Shue B.C."/>
            <person name="Siden-Kiamos I."/>
            <person name="Simpson M."/>
            <person name="Skupski M.P."/>
            <person name="Smith T.J."/>
            <person name="Spier E."/>
            <person name="Spradling A.C."/>
            <person name="Stapleton M."/>
            <person name="Strong R."/>
            <person name="Sun E."/>
            <person name="Svirskas R."/>
            <person name="Tector C."/>
            <person name="Turner R."/>
            <person name="Venter E."/>
            <person name="Wang A.H."/>
            <person name="Wang X."/>
            <person name="Wang Z.-Y."/>
            <person name="Wassarman D.A."/>
            <person name="Weinstock G.M."/>
            <person name="Weissenbach J."/>
            <person name="Williams S.M."/>
            <person name="Woodage T."/>
            <person name="Worley K.C."/>
            <person name="Wu D."/>
            <person name="Yang S."/>
            <person name="Yao Q.A."/>
            <person name="Ye J."/>
            <person name="Yeh R.-F."/>
            <person name="Zaveri J.S."/>
            <person name="Zhan M."/>
            <person name="Zhang G."/>
            <person name="Zhao Q."/>
            <person name="Zheng L."/>
            <person name="Zheng X.H."/>
            <person name="Zhong F.N."/>
            <person name="Zhong W."/>
            <person name="Zhou X."/>
            <person name="Zhu S.C."/>
            <person name="Zhu X."/>
            <person name="Smith H.O."/>
            <person name="Gibbs R.A."/>
            <person name="Myers E.W."/>
            <person name="Rubin G.M."/>
            <person name="Venter J.C."/>
        </authorList>
    </citation>
    <scope>NUCLEOTIDE SEQUENCE [LARGE SCALE GENOMIC DNA]</scope>
    <source>
        <strain>Berkeley</strain>
    </source>
</reference>
<reference key="2">
    <citation type="journal article" date="2002" name="Genome Biol.">
        <title>Annotation of the Drosophila melanogaster euchromatic genome: a systematic review.</title>
        <authorList>
            <person name="Misra S."/>
            <person name="Crosby M.A."/>
            <person name="Mungall C.J."/>
            <person name="Matthews B.B."/>
            <person name="Campbell K.S."/>
            <person name="Hradecky P."/>
            <person name="Huang Y."/>
            <person name="Kaminker J.S."/>
            <person name="Millburn G.H."/>
            <person name="Prochnik S.E."/>
            <person name="Smith C.D."/>
            <person name="Tupy J.L."/>
            <person name="Whitfield E.J."/>
            <person name="Bayraktaroglu L."/>
            <person name="Berman B.P."/>
            <person name="Bettencourt B.R."/>
            <person name="Celniker S.E."/>
            <person name="de Grey A.D.N.J."/>
            <person name="Drysdale R.A."/>
            <person name="Harris N.L."/>
            <person name="Richter J."/>
            <person name="Russo S."/>
            <person name="Schroeder A.J."/>
            <person name="Shu S.Q."/>
            <person name="Stapleton M."/>
            <person name="Yamada C."/>
            <person name="Ashburner M."/>
            <person name="Gelbart W.M."/>
            <person name="Rubin G.M."/>
            <person name="Lewis S.E."/>
        </authorList>
    </citation>
    <scope>GENOME REANNOTATION</scope>
    <source>
        <strain>Berkeley</strain>
    </source>
</reference>
<reference key="3">
    <citation type="submission" date="2009-02" db="EMBL/GenBank/DDBJ databases">
        <authorList>
            <person name="Stapleton M."/>
            <person name="Brokstein P."/>
            <person name="Hong L."/>
            <person name="Agbayani A."/>
            <person name="Carlson J.W."/>
            <person name="Booth B."/>
            <person name="Champe M."/>
            <person name="Chavez C."/>
            <person name="Dorsett V."/>
            <person name="Dresnek D."/>
            <person name="Farfan D."/>
            <person name="Frise E."/>
            <person name="George R.A."/>
            <person name="Gonzalez M."/>
            <person name="Guarin H."/>
            <person name="Kapadia B."/>
            <person name="Kronmiller B."/>
            <person name="Li P.W."/>
            <person name="Liao G."/>
            <person name="Miranda A."/>
            <person name="Mungall C.J."/>
            <person name="Nunoo J."/>
            <person name="Pacleb J.M."/>
            <person name="Paragas V."/>
            <person name="Park S."/>
            <person name="Patel S."/>
            <person name="Phouanenavong S."/>
            <person name="Sandler J."/>
            <person name="Wan K.H."/>
            <person name="Yu C."/>
            <person name="Lewis S.E."/>
            <person name="Rubin G.M."/>
            <person name="Celniker S.E."/>
        </authorList>
    </citation>
    <scope>NUCLEOTIDE SEQUENCE [LARGE SCALE MRNA]</scope>
    <source>
        <strain>Berkeley</strain>
        <tissue>Embryo</tissue>
    </source>
</reference>
<reference key="4">
    <citation type="journal article" date="2010" name="Cell">
        <title>Ragulator-Rag complex targets mTORC1 to the lysosomal surface and is necessary for its activation by amino acids.</title>
        <authorList>
            <person name="Sancak Y."/>
            <person name="Bar-Peled L."/>
            <person name="Zoncu R."/>
            <person name="Markhard A.L."/>
            <person name="Nada S."/>
            <person name="Sabatini D.M."/>
        </authorList>
    </citation>
    <scope>FUNCTION</scope>
</reference>
<organism>
    <name type="scientific">Drosophila melanogaster</name>
    <name type="common">Fruit fly</name>
    <dbReference type="NCBI Taxonomy" id="7227"/>
    <lineage>
        <taxon>Eukaryota</taxon>
        <taxon>Metazoa</taxon>
        <taxon>Ecdysozoa</taxon>
        <taxon>Arthropoda</taxon>
        <taxon>Hexapoda</taxon>
        <taxon>Insecta</taxon>
        <taxon>Pterygota</taxon>
        <taxon>Neoptera</taxon>
        <taxon>Endopterygota</taxon>
        <taxon>Diptera</taxon>
        <taxon>Brachycera</taxon>
        <taxon>Muscomorpha</taxon>
        <taxon>Ephydroidea</taxon>
        <taxon>Drosophilidae</taxon>
        <taxon>Drosophila</taxon>
        <taxon>Sophophora</taxon>
    </lineage>
</organism>
<keyword id="KW-1185">Reference proteome</keyword>
<dbReference type="EMBL" id="AE013599">
    <property type="protein sequence ID" value="AAF57685.1"/>
    <property type="molecule type" value="Genomic_DNA"/>
</dbReference>
<dbReference type="EMBL" id="AE013599">
    <property type="protein sequence ID" value="ACL83153.1"/>
    <property type="molecule type" value="Genomic_DNA"/>
</dbReference>
<dbReference type="EMBL" id="BT011055">
    <property type="protein sequence ID" value="AAR31126.1"/>
    <property type="molecule type" value="mRNA"/>
</dbReference>
<dbReference type="EMBL" id="BT030774">
    <property type="protein sequence ID" value="ABV82156.1"/>
    <property type="molecule type" value="mRNA"/>
</dbReference>
<dbReference type="EMBL" id="BT058093">
    <property type="protein sequence ID" value="ACM86249.1"/>
    <property type="molecule type" value="mRNA"/>
</dbReference>
<dbReference type="RefSeq" id="NP_001137699.1">
    <property type="nucleotide sequence ID" value="NM_001144227.2"/>
</dbReference>
<dbReference type="RefSeq" id="NP_611334.1">
    <property type="nucleotide sequence ID" value="NM_137490.3"/>
</dbReference>
<dbReference type="SMR" id="Q9V8I2"/>
<dbReference type="BioGRID" id="62798">
    <property type="interactions" value="2"/>
</dbReference>
<dbReference type="ComplexPortal" id="CPX-2709">
    <property type="entry name" value="Ragulator complex"/>
</dbReference>
<dbReference type="DIP" id="DIP-21855N"/>
<dbReference type="FunCoup" id="Q9V8I2">
    <property type="interactions" value="502"/>
</dbReference>
<dbReference type="IntAct" id="Q9V8I2">
    <property type="interactions" value="2"/>
</dbReference>
<dbReference type="STRING" id="7227.FBpp0289083"/>
<dbReference type="PaxDb" id="7227-FBpp0289083"/>
<dbReference type="DNASU" id="37122"/>
<dbReference type="EnsemblMetazoa" id="FBtr0086694">
    <property type="protein sequence ID" value="FBpp0085873"/>
    <property type="gene ID" value="FBgn0034350"/>
</dbReference>
<dbReference type="EnsemblMetazoa" id="FBtr0299805">
    <property type="protein sequence ID" value="FBpp0289083"/>
    <property type="gene ID" value="FBgn0034350"/>
</dbReference>
<dbReference type="GeneID" id="37122"/>
<dbReference type="KEGG" id="dme:Dmel_CG5189"/>
<dbReference type="UCSC" id="CG5189-RA">
    <property type="organism name" value="d. melanogaster"/>
</dbReference>
<dbReference type="AGR" id="FB:FBgn0034350"/>
<dbReference type="CTD" id="28956"/>
<dbReference type="FlyBase" id="FBgn0034350">
    <property type="gene designation" value="Lamtor2"/>
</dbReference>
<dbReference type="VEuPathDB" id="VectorBase:FBgn0034350"/>
<dbReference type="eggNOG" id="KOG4107">
    <property type="taxonomic scope" value="Eukaryota"/>
</dbReference>
<dbReference type="GeneTree" id="ENSGT00390000006100"/>
<dbReference type="HOGENOM" id="CLU_141118_0_0_1"/>
<dbReference type="InParanoid" id="Q9V8I2"/>
<dbReference type="OMA" id="WAAYEKN"/>
<dbReference type="OrthoDB" id="271745at2759"/>
<dbReference type="PhylomeDB" id="Q9V8I2"/>
<dbReference type="Reactome" id="R-DME-1632852">
    <property type="pathway name" value="Macroautophagy"/>
</dbReference>
<dbReference type="Reactome" id="R-DME-165159">
    <property type="pathway name" value="MTOR signalling"/>
</dbReference>
<dbReference type="Reactome" id="R-DME-166208">
    <property type="pathway name" value="mTORC1-mediated signalling"/>
</dbReference>
<dbReference type="Reactome" id="R-DME-380972">
    <property type="pathway name" value="Energy dependent regulation of mTOR by LKB1-AMPK"/>
</dbReference>
<dbReference type="Reactome" id="R-DME-5628897">
    <property type="pathway name" value="TP53 Regulates Metabolic Genes"/>
</dbReference>
<dbReference type="Reactome" id="R-DME-5674135">
    <property type="pathway name" value="MAP2K and MAPK activation"/>
</dbReference>
<dbReference type="Reactome" id="R-DME-6798695">
    <property type="pathway name" value="Neutrophil degranulation"/>
</dbReference>
<dbReference type="Reactome" id="R-DME-8943724">
    <property type="pathway name" value="Regulation of PTEN gene transcription"/>
</dbReference>
<dbReference type="Reactome" id="R-DME-9639288">
    <property type="pathway name" value="Amino acids regulate mTORC1"/>
</dbReference>
<dbReference type="BioGRID-ORCS" id="37122">
    <property type="hits" value="1 hit in 1 CRISPR screen"/>
</dbReference>
<dbReference type="GenomeRNAi" id="37122"/>
<dbReference type="PRO" id="PR:Q9V8I2"/>
<dbReference type="Proteomes" id="UP000000803">
    <property type="component" value="Chromosome 2R"/>
</dbReference>
<dbReference type="Bgee" id="FBgn0034350">
    <property type="expression patterns" value="Expressed in seminal fluid secreting gland and 12 other cell types or tissues"/>
</dbReference>
<dbReference type="GO" id="GO:0071986">
    <property type="term" value="C:Ragulator complex"/>
    <property type="evidence" value="ECO:0000315"/>
    <property type="project" value="FlyBase"/>
</dbReference>
<dbReference type="GO" id="GO:0005085">
    <property type="term" value="F:guanyl-nucleotide exchange factor activity"/>
    <property type="evidence" value="ECO:0007669"/>
    <property type="project" value="InterPro"/>
</dbReference>
<dbReference type="GO" id="GO:0060090">
    <property type="term" value="F:molecular adaptor activity"/>
    <property type="evidence" value="ECO:0007669"/>
    <property type="project" value="InterPro"/>
</dbReference>
<dbReference type="GO" id="GO:0071230">
    <property type="term" value="P:cellular response to amino acid stimulus"/>
    <property type="evidence" value="ECO:0000315"/>
    <property type="project" value="FlyBase"/>
</dbReference>
<dbReference type="GO" id="GO:0032008">
    <property type="term" value="P:positive regulation of TOR signaling"/>
    <property type="evidence" value="ECO:0000315"/>
    <property type="project" value="UniProtKB"/>
</dbReference>
<dbReference type="GO" id="GO:1904263">
    <property type="term" value="P:positive regulation of TORC1 signaling"/>
    <property type="evidence" value="ECO:0000315"/>
    <property type="project" value="FlyBase"/>
</dbReference>
<dbReference type="GO" id="GO:0008104">
    <property type="term" value="P:protein localization"/>
    <property type="evidence" value="ECO:0000250"/>
    <property type="project" value="UniProtKB"/>
</dbReference>
<dbReference type="GO" id="GO:0001558">
    <property type="term" value="P:regulation of cell growth"/>
    <property type="evidence" value="ECO:0000250"/>
    <property type="project" value="UniProtKB"/>
</dbReference>
<dbReference type="FunFam" id="3.30.450.30:FF:000004">
    <property type="entry name" value="ragulator complex protein LAMTOR2"/>
    <property type="match status" value="1"/>
</dbReference>
<dbReference type="Gene3D" id="3.30.450.30">
    <property type="entry name" value="Dynein light chain 2a, cytoplasmic"/>
    <property type="match status" value="1"/>
</dbReference>
<dbReference type="InterPro" id="IPR037587">
    <property type="entry name" value="LAMTOR2-like"/>
</dbReference>
<dbReference type="InterPro" id="IPR004942">
    <property type="entry name" value="Roadblock/LAMTOR2_dom"/>
</dbReference>
<dbReference type="PANTHER" id="PTHR13323">
    <property type="entry name" value="LATE ENDOSOMAL/LYSOSOMAL MP1 INTERACTING PROTEIN"/>
    <property type="match status" value="1"/>
</dbReference>
<dbReference type="Pfam" id="PF03259">
    <property type="entry name" value="Robl_LC7"/>
    <property type="match status" value="1"/>
</dbReference>
<dbReference type="SMART" id="SM00960">
    <property type="entry name" value="Robl_LC7"/>
    <property type="match status" value="1"/>
</dbReference>
<dbReference type="SUPFAM" id="SSF103196">
    <property type="entry name" value="Roadblock/LC7 domain"/>
    <property type="match status" value="1"/>
</dbReference>
<accession>Q9V8I2</accession>
<accession>A8E6I2</accession>
<accession>B7YZK0</accession>
<accession>Q6NP73</accession>
<protein>
    <recommendedName>
        <fullName evidence="3">Ragulator complex protein LAMTOR2 homolog</fullName>
    </recommendedName>
    <alternativeName>
        <fullName evidence="3">Late endosomal/lysosomal adaptor and MAPK and MTOR activator 2</fullName>
    </alternativeName>
</protein>
<evidence type="ECO:0000250" key="1">
    <source>
        <dbReference type="UniProtKB" id="Q6IAA8"/>
    </source>
</evidence>
<evidence type="ECO:0000269" key="2">
    <source>
    </source>
</evidence>
<evidence type="ECO:0000303" key="3">
    <source>
    </source>
</evidence>
<evidence type="ECO:0000305" key="4"/>
<evidence type="ECO:0000312" key="5">
    <source>
        <dbReference type="FlyBase" id="FBgn0034350"/>
    </source>
</evidence>
<gene>
    <name evidence="3 5" type="primary">Lamtor2</name>
    <name evidence="5" type="ORF">CG5189</name>
</gene>
<proteinExistence type="evidence at protein level"/>